<evidence type="ECO:0000250" key="1"/>
<evidence type="ECO:0000305" key="2"/>
<organism>
    <name type="scientific">Corynebacterium diphtheriae (strain ATCC 700971 / NCTC 13129 / Biotype gravis)</name>
    <dbReference type="NCBI Taxonomy" id="257309"/>
    <lineage>
        <taxon>Bacteria</taxon>
        <taxon>Bacillati</taxon>
        <taxon>Actinomycetota</taxon>
        <taxon>Actinomycetes</taxon>
        <taxon>Mycobacteriales</taxon>
        <taxon>Corynebacteriaceae</taxon>
        <taxon>Corynebacterium</taxon>
    </lineage>
</organism>
<gene>
    <name type="primary">mshC</name>
    <name type="synonym">cysS2</name>
    <name type="ordered locus">DIP1261</name>
</gene>
<proteinExistence type="inferred from homology"/>
<accession>Q6NH81</accession>
<name>MSHC_CORDI</name>
<sequence length="414" mass="45804">MQSWPMPTIPSVPGKPAVLSLFDTSDQLIKPVEVDTPEVGVYVCGITPYDSTHLGHAATYLTFDLINRQLIDAGHRVHFVQNITDVDEPLFERALRDGVDWRELGSSQIDLFRSDMENLSVIPPRHYVGAMESIPEVIAMVETMLANGTAYIVESDSYRDIYASITATTQFGYESHYSRELMEQFFAERGGDPERVGKKDSLDALIWRAHRLGEPSWDAPFGAGRPGWHVECSAIATHHLGSHFAIQGGGSDLIFPHHEFSAAHAEATFGESRMAGHYVHTGMIGLDGTKMSKSLGNLVFVSRLTSEGYHPSDIRLGVFAGHYRDDRDWSTDLLTAAQERRQAWITAADNARDVQQVQQTIQKIRHLLANDLNTPAVLAEVDNWANLIPLNDSARTEAGRLMASGLDALLGVKI</sequence>
<keyword id="KW-0067">ATP-binding</keyword>
<keyword id="KW-0436">Ligase</keyword>
<keyword id="KW-0479">Metal-binding</keyword>
<keyword id="KW-0547">Nucleotide-binding</keyword>
<keyword id="KW-1185">Reference proteome</keyword>
<keyword id="KW-0862">Zinc</keyword>
<reference key="1">
    <citation type="journal article" date="2003" name="Nucleic Acids Res.">
        <title>The complete genome sequence and analysis of Corynebacterium diphtheriae NCTC13129.</title>
        <authorList>
            <person name="Cerdeno-Tarraga A.-M."/>
            <person name="Efstratiou A."/>
            <person name="Dover L.G."/>
            <person name="Holden M.T.G."/>
            <person name="Pallen M.J."/>
            <person name="Bentley S.D."/>
            <person name="Besra G.S."/>
            <person name="Churcher C.M."/>
            <person name="James K.D."/>
            <person name="De Zoysa A."/>
            <person name="Chillingworth T."/>
            <person name="Cronin A."/>
            <person name="Dowd L."/>
            <person name="Feltwell T."/>
            <person name="Hamlin N."/>
            <person name="Holroyd S."/>
            <person name="Jagels K."/>
            <person name="Moule S."/>
            <person name="Quail M.A."/>
            <person name="Rabbinowitsch E."/>
            <person name="Rutherford K.M."/>
            <person name="Thomson N.R."/>
            <person name="Unwin L."/>
            <person name="Whitehead S."/>
            <person name="Barrell B.G."/>
            <person name="Parkhill J."/>
        </authorList>
    </citation>
    <scope>NUCLEOTIDE SEQUENCE [LARGE SCALE GENOMIC DNA]</scope>
    <source>
        <strain>ATCC 700971 / NCTC 13129 / Biotype gravis</strain>
    </source>
</reference>
<protein>
    <recommendedName>
        <fullName>L-cysteine:1D-myo-inositol 2-amino-2-deoxy-alpha-D-glucopyranoside ligase</fullName>
        <shortName>L-Cys:GlcN-Ins ligase</shortName>
        <ecNumber>6.3.1.13</ecNumber>
    </recommendedName>
    <alternativeName>
        <fullName>Mycothiol ligase</fullName>
        <shortName>MSH ligase</shortName>
    </alternativeName>
</protein>
<comment type="function">
    <text evidence="1">Catalyzes the ATP-dependent condensation of GlcN-Ins and L-cysteine to form L-Cys-GlcN-Ins.</text>
</comment>
<comment type="catalytic activity">
    <reaction>
        <text>1D-myo-inositol 2-amino-2-deoxy-alpha-D-glucopyranoside + L-cysteine + ATP = 1D-myo-inositol 2-(L-cysteinylamino)-2-deoxy-alpha-D-glucopyranoside + AMP + diphosphate + H(+)</text>
        <dbReference type="Rhea" id="RHEA:26176"/>
        <dbReference type="ChEBI" id="CHEBI:15378"/>
        <dbReference type="ChEBI" id="CHEBI:30616"/>
        <dbReference type="ChEBI" id="CHEBI:33019"/>
        <dbReference type="ChEBI" id="CHEBI:35235"/>
        <dbReference type="ChEBI" id="CHEBI:58886"/>
        <dbReference type="ChEBI" id="CHEBI:58887"/>
        <dbReference type="ChEBI" id="CHEBI:456215"/>
        <dbReference type="EC" id="6.3.1.13"/>
    </reaction>
</comment>
<comment type="cofactor">
    <cofactor evidence="1">
        <name>Zn(2+)</name>
        <dbReference type="ChEBI" id="CHEBI:29105"/>
    </cofactor>
    <text evidence="1">Binds 1 zinc ion per subunit.</text>
</comment>
<comment type="subunit">
    <text evidence="1">Monomer.</text>
</comment>
<comment type="similarity">
    <text evidence="2">Belongs to the class-I aminoacyl-tRNA synthetase family. MshC subfamily.</text>
</comment>
<feature type="chain" id="PRO_0000159385" description="L-cysteine:1D-myo-inositol 2-amino-2-deoxy-alpha-D-glucopyranoside ligase">
    <location>
        <begin position="1"/>
        <end position="414"/>
    </location>
</feature>
<feature type="short sequence motif" description="'HIGH' region">
    <location>
        <begin position="46"/>
        <end position="56"/>
    </location>
</feature>
<feature type="short sequence motif" description="'ERGGDP' region">
    <location>
        <begin position="188"/>
        <end position="193"/>
    </location>
</feature>
<feature type="short sequence motif" description="'KMSKS' region">
    <location>
        <begin position="290"/>
        <end position="294"/>
    </location>
</feature>
<feature type="binding site" evidence="1">
    <location>
        <begin position="44"/>
        <end position="47"/>
    </location>
    <ligand>
        <name>L-cysteinyl-5'-AMP</name>
        <dbReference type="ChEBI" id="CHEBI:144924"/>
    </ligand>
</feature>
<feature type="binding site" evidence="1">
    <location>
        <position position="44"/>
    </location>
    <ligand>
        <name>Zn(2+)</name>
        <dbReference type="ChEBI" id="CHEBI:29105"/>
    </ligand>
</feature>
<feature type="binding site" evidence="1">
    <location>
        <position position="59"/>
    </location>
    <ligand>
        <name>L-cysteinyl-5'-AMP</name>
        <dbReference type="ChEBI" id="CHEBI:144924"/>
    </ligand>
</feature>
<feature type="binding site" evidence="1">
    <location>
        <begin position="82"/>
        <end position="84"/>
    </location>
    <ligand>
        <name>L-cysteinyl-5'-AMP</name>
        <dbReference type="ChEBI" id="CHEBI:144924"/>
    </ligand>
</feature>
<feature type="binding site" evidence="1">
    <location>
        <position position="228"/>
    </location>
    <ligand>
        <name>L-cysteinyl-5'-AMP</name>
        <dbReference type="ChEBI" id="CHEBI:144924"/>
    </ligand>
</feature>
<feature type="binding site" evidence="1">
    <location>
        <position position="232"/>
    </location>
    <ligand>
        <name>Zn(2+)</name>
        <dbReference type="ChEBI" id="CHEBI:29105"/>
    </ligand>
</feature>
<feature type="binding site" evidence="1">
    <location>
        <begin position="250"/>
        <end position="252"/>
    </location>
    <ligand>
        <name>L-cysteinyl-5'-AMP</name>
        <dbReference type="ChEBI" id="CHEBI:144924"/>
    </ligand>
</feature>
<feature type="binding site" evidence="1">
    <location>
        <position position="257"/>
    </location>
    <ligand>
        <name>Zn(2+)</name>
        <dbReference type="ChEBI" id="CHEBI:29105"/>
    </ligand>
</feature>
<feature type="binding site" evidence="1">
    <location>
        <position position="284"/>
    </location>
    <ligand>
        <name>L-cysteinyl-5'-AMP</name>
        <dbReference type="ChEBI" id="CHEBI:144924"/>
    </ligand>
</feature>
<dbReference type="EC" id="6.3.1.13"/>
<dbReference type="EMBL" id="BX248357">
    <property type="protein sequence ID" value="CAE49790.1"/>
    <property type="molecule type" value="Genomic_DNA"/>
</dbReference>
<dbReference type="RefSeq" id="WP_010934934.1">
    <property type="nucleotide sequence ID" value="NC_002935.2"/>
</dbReference>
<dbReference type="SMR" id="Q6NH81"/>
<dbReference type="STRING" id="257309.DIP1261"/>
<dbReference type="KEGG" id="cdi:DIP1261"/>
<dbReference type="HOGENOM" id="CLU_013528_0_0_11"/>
<dbReference type="Proteomes" id="UP000002198">
    <property type="component" value="Chromosome"/>
</dbReference>
<dbReference type="GO" id="GO:0005829">
    <property type="term" value="C:cytosol"/>
    <property type="evidence" value="ECO:0007669"/>
    <property type="project" value="TreeGrafter"/>
</dbReference>
<dbReference type="GO" id="GO:0005524">
    <property type="term" value="F:ATP binding"/>
    <property type="evidence" value="ECO:0007669"/>
    <property type="project" value="UniProtKB-KW"/>
</dbReference>
<dbReference type="GO" id="GO:0035446">
    <property type="term" value="F:cysteine-glucosaminylinositol ligase activity"/>
    <property type="evidence" value="ECO:0007669"/>
    <property type="project" value="UniProtKB-UniRule"/>
</dbReference>
<dbReference type="GO" id="GO:0004817">
    <property type="term" value="F:cysteine-tRNA ligase activity"/>
    <property type="evidence" value="ECO:0007669"/>
    <property type="project" value="TreeGrafter"/>
</dbReference>
<dbReference type="GO" id="GO:0008270">
    <property type="term" value="F:zinc ion binding"/>
    <property type="evidence" value="ECO:0007669"/>
    <property type="project" value="UniProtKB-UniRule"/>
</dbReference>
<dbReference type="GO" id="GO:0006423">
    <property type="term" value="P:cysteinyl-tRNA aminoacylation"/>
    <property type="evidence" value="ECO:0007669"/>
    <property type="project" value="TreeGrafter"/>
</dbReference>
<dbReference type="GO" id="GO:0010125">
    <property type="term" value="P:mycothiol biosynthetic process"/>
    <property type="evidence" value="ECO:0007669"/>
    <property type="project" value="UniProtKB-UniRule"/>
</dbReference>
<dbReference type="Gene3D" id="1.20.120.640">
    <property type="entry name" value="Anticodon-binding domain of a subclass of class I aminoacyl-tRNA synthetases"/>
    <property type="match status" value="1"/>
</dbReference>
<dbReference type="Gene3D" id="3.40.50.620">
    <property type="entry name" value="HUPs"/>
    <property type="match status" value="1"/>
</dbReference>
<dbReference type="HAMAP" id="MF_01697">
    <property type="entry name" value="MshC"/>
    <property type="match status" value="1"/>
</dbReference>
<dbReference type="InterPro" id="IPR024909">
    <property type="entry name" value="Cys-tRNA/MSH_ligase"/>
</dbReference>
<dbReference type="InterPro" id="IPR017812">
    <property type="entry name" value="Mycothiol_ligase_MshC"/>
</dbReference>
<dbReference type="InterPro" id="IPR014729">
    <property type="entry name" value="Rossmann-like_a/b/a_fold"/>
</dbReference>
<dbReference type="InterPro" id="IPR032678">
    <property type="entry name" value="tRNA-synt_1_cat_dom"/>
</dbReference>
<dbReference type="NCBIfam" id="TIGR03447">
    <property type="entry name" value="mycothiol_MshC"/>
    <property type="match status" value="1"/>
</dbReference>
<dbReference type="PANTHER" id="PTHR10890:SF3">
    <property type="entry name" value="CYSTEINE--TRNA LIGASE, CYTOPLASMIC"/>
    <property type="match status" value="1"/>
</dbReference>
<dbReference type="PANTHER" id="PTHR10890">
    <property type="entry name" value="CYSTEINYL-TRNA SYNTHETASE"/>
    <property type="match status" value="1"/>
</dbReference>
<dbReference type="Pfam" id="PF01406">
    <property type="entry name" value="tRNA-synt_1e"/>
    <property type="match status" value="1"/>
</dbReference>
<dbReference type="PRINTS" id="PR00983">
    <property type="entry name" value="TRNASYNTHCYS"/>
</dbReference>
<dbReference type="SUPFAM" id="SSF52374">
    <property type="entry name" value="Nucleotidylyl transferase"/>
    <property type="match status" value="1"/>
</dbReference>